<keyword id="KW-0143">Chaperone</keyword>
<keyword id="KW-0963">Cytoplasm</keyword>
<keyword id="KW-1185">Reference proteome</keyword>
<organism>
    <name type="scientific">Aliivibrio fischeri (strain ATCC 700601 / ES114)</name>
    <name type="common">Vibrio fischeri</name>
    <dbReference type="NCBI Taxonomy" id="312309"/>
    <lineage>
        <taxon>Bacteria</taxon>
        <taxon>Pseudomonadati</taxon>
        <taxon>Pseudomonadota</taxon>
        <taxon>Gammaproteobacteria</taxon>
        <taxon>Vibrionales</taxon>
        <taxon>Vibrionaceae</taxon>
        <taxon>Aliivibrio</taxon>
    </lineage>
</organism>
<proteinExistence type="inferred from homology"/>
<sequence length="96" mass="10253">MNIRPLHDRVIVERQEVESKSAGGIVLTGSAAEKSTRGTVLAVGKGRILENGTVQPLDVKVGDSVIFAEGYGTKSEKIDGKEVLIMSENDIMAIVE</sequence>
<name>CH10_ALIF1</name>
<reference key="1">
    <citation type="journal article" date="2005" name="Proc. Natl. Acad. Sci. U.S.A.">
        <title>Complete genome sequence of Vibrio fischeri: a symbiotic bacterium with pathogenic congeners.</title>
        <authorList>
            <person name="Ruby E.G."/>
            <person name="Urbanowski M."/>
            <person name="Campbell J."/>
            <person name="Dunn A."/>
            <person name="Faini M."/>
            <person name="Gunsalus R."/>
            <person name="Lostroh P."/>
            <person name="Lupp C."/>
            <person name="McCann J."/>
            <person name="Millikan D."/>
            <person name="Schaefer A."/>
            <person name="Stabb E."/>
            <person name="Stevens A."/>
            <person name="Visick K."/>
            <person name="Whistler C."/>
            <person name="Greenberg E.P."/>
        </authorList>
    </citation>
    <scope>NUCLEOTIDE SEQUENCE [LARGE SCALE GENOMIC DNA]</scope>
    <source>
        <strain>ATCC 700601 / ES114</strain>
    </source>
</reference>
<accession>Q5E8E7</accession>
<gene>
    <name evidence="1" type="primary">groES</name>
    <name evidence="1" type="synonym">groS</name>
    <name type="ordered locus">VF_0204</name>
</gene>
<protein>
    <recommendedName>
        <fullName evidence="1">Co-chaperonin GroES</fullName>
    </recommendedName>
    <alternativeName>
        <fullName evidence="1">10 kDa chaperonin</fullName>
    </alternativeName>
    <alternativeName>
        <fullName evidence="1">Chaperonin-10</fullName>
        <shortName evidence="1">Cpn10</shortName>
    </alternativeName>
</protein>
<feature type="chain" id="PRO_1000025400" description="Co-chaperonin GroES">
    <location>
        <begin position="1"/>
        <end position="96"/>
    </location>
</feature>
<evidence type="ECO:0000255" key="1">
    <source>
        <dbReference type="HAMAP-Rule" id="MF_00580"/>
    </source>
</evidence>
<dbReference type="EMBL" id="CP000020">
    <property type="protein sequence ID" value="AAW84699.1"/>
    <property type="molecule type" value="Genomic_DNA"/>
</dbReference>
<dbReference type="RefSeq" id="WP_005417156.1">
    <property type="nucleotide sequence ID" value="NZ_CAWLES010000001.1"/>
</dbReference>
<dbReference type="RefSeq" id="YP_203587.1">
    <property type="nucleotide sequence ID" value="NC_006840.2"/>
</dbReference>
<dbReference type="SMR" id="Q5E8E7"/>
<dbReference type="STRING" id="312309.VF_0204"/>
<dbReference type="EnsemblBacteria" id="AAW84699">
    <property type="protein sequence ID" value="AAW84699"/>
    <property type="gene ID" value="VF_0204"/>
</dbReference>
<dbReference type="GeneID" id="54162828"/>
<dbReference type="KEGG" id="vfi:VF_0204"/>
<dbReference type="PATRIC" id="fig|312309.11.peg.202"/>
<dbReference type="eggNOG" id="COG0234">
    <property type="taxonomic scope" value="Bacteria"/>
</dbReference>
<dbReference type="HOGENOM" id="CLU_132825_1_1_6"/>
<dbReference type="OrthoDB" id="9806791at2"/>
<dbReference type="Proteomes" id="UP000000537">
    <property type="component" value="Chromosome I"/>
</dbReference>
<dbReference type="GO" id="GO:0005737">
    <property type="term" value="C:cytoplasm"/>
    <property type="evidence" value="ECO:0007669"/>
    <property type="project" value="UniProtKB-SubCell"/>
</dbReference>
<dbReference type="GO" id="GO:0005524">
    <property type="term" value="F:ATP binding"/>
    <property type="evidence" value="ECO:0007669"/>
    <property type="project" value="InterPro"/>
</dbReference>
<dbReference type="GO" id="GO:0046872">
    <property type="term" value="F:metal ion binding"/>
    <property type="evidence" value="ECO:0007669"/>
    <property type="project" value="TreeGrafter"/>
</dbReference>
<dbReference type="GO" id="GO:0044183">
    <property type="term" value="F:protein folding chaperone"/>
    <property type="evidence" value="ECO:0007669"/>
    <property type="project" value="InterPro"/>
</dbReference>
<dbReference type="GO" id="GO:0051087">
    <property type="term" value="F:protein-folding chaperone binding"/>
    <property type="evidence" value="ECO:0007669"/>
    <property type="project" value="TreeGrafter"/>
</dbReference>
<dbReference type="GO" id="GO:0051082">
    <property type="term" value="F:unfolded protein binding"/>
    <property type="evidence" value="ECO:0007669"/>
    <property type="project" value="TreeGrafter"/>
</dbReference>
<dbReference type="GO" id="GO:0051085">
    <property type="term" value="P:chaperone cofactor-dependent protein refolding"/>
    <property type="evidence" value="ECO:0007669"/>
    <property type="project" value="TreeGrafter"/>
</dbReference>
<dbReference type="CDD" id="cd00320">
    <property type="entry name" value="cpn10"/>
    <property type="match status" value="1"/>
</dbReference>
<dbReference type="FunFam" id="2.30.33.40:FF:000001">
    <property type="entry name" value="10 kDa chaperonin"/>
    <property type="match status" value="1"/>
</dbReference>
<dbReference type="Gene3D" id="2.30.33.40">
    <property type="entry name" value="GroES chaperonin"/>
    <property type="match status" value="1"/>
</dbReference>
<dbReference type="HAMAP" id="MF_00580">
    <property type="entry name" value="CH10"/>
    <property type="match status" value="1"/>
</dbReference>
<dbReference type="InterPro" id="IPR020818">
    <property type="entry name" value="Chaperonin_GroES"/>
</dbReference>
<dbReference type="InterPro" id="IPR037124">
    <property type="entry name" value="Chaperonin_GroES_sf"/>
</dbReference>
<dbReference type="InterPro" id="IPR018369">
    <property type="entry name" value="Chaprnonin_Cpn10_CS"/>
</dbReference>
<dbReference type="InterPro" id="IPR011032">
    <property type="entry name" value="GroES-like_sf"/>
</dbReference>
<dbReference type="NCBIfam" id="NF001526">
    <property type="entry name" value="PRK00364.1-1"/>
    <property type="match status" value="1"/>
</dbReference>
<dbReference type="NCBIfam" id="NF001527">
    <property type="entry name" value="PRK00364.1-2"/>
    <property type="match status" value="1"/>
</dbReference>
<dbReference type="NCBIfam" id="NF001531">
    <property type="entry name" value="PRK00364.2-2"/>
    <property type="match status" value="1"/>
</dbReference>
<dbReference type="PANTHER" id="PTHR10772">
    <property type="entry name" value="10 KDA HEAT SHOCK PROTEIN"/>
    <property type="match status" value="1"/>
</dbReference>
<dbReference type="PANTHER" id="PTHR10772:SF58">
    <property type="entry name" value="CO-CHAPERONIN GROES"/>
    <property type="match status" value="1"/>
</dbReference>
<dbReference type="Pfam" id="PF00166">
    <property type="entry name" value="Cpn10"/>
    <property type="match status" value="1"/>
</dbReference>
<dbReference type="PRINTS" id="PR00297">
    <property type="entry name" value="CHAPERONIN10"/>
</dbReference>
<dbReference type="SMART" id="SM00883">
    <property type="entry name" value="Cpn10"/>
    <property type="match status" value="1"/>
</dbReference>
<dbReference type="SUPFAM" id="SSF50129">
    <property type="entry name" value="GroES-like"/>
    <property type="match status" value="1"/>
</dbReference>
<dbReference type="PROSITE" id="PS00681">
    <property type="entry name" value="CHAPERONINS_CPN10"/>
    <property type="match status" value="1"/>
</dbReference>
<comment type="function">
    <text evidence="1">Together with the chaperonin GroEL, plays an essential role in assisting protein folding. The GroEL-GroES system forms a nano-cage that allows encapsulation of the non-native substrate proteins and provides a physical environment optimized to promote and accelerate protein folding. GroES binds to the apical surface of the GroEL ring, thereby capping the opening of the GroEL channel.</text>
</comment>
<comment type="subunit">
    <text evidence="1">Heptamer of 7 subunits arranged in a ring. Interacts with the chaperonin GroEL.</text>
</comment>
<comment type="subcellular location">
    <subcellularLocation>
        <location evidence="1">Cytoplasm</location>
    </subcellularLocation>
</comment>
<comment type="similarity">
    <text evidence="1">Belongs to the GroES chaperonin family.</text>
</comment>